<reference key="1">
    <citation type="journal article" date="1999" name="Placenta">
        <title>Human carboxylesterases in term placentae: enzymatic characterization, molecular cloning and evidence for the existence of multiple forms.</title>
        <authorList>
            <person name="Yan B."/>
            <person name="Matoney L."/>
            <person name="Yang D."/>
        </authorList>
    </citation>
    <scope>NUCLEOTIDE SEQUENCE [MRNA] (ISOFORM 1)</scope>
    <scope>TISSUE SPECIFICITY</scope>
    <source>
        <tissue>Placenta</tissue>
    </source>
</reference>
<reference key="2">
    <citation type="journal article" date="2004" name="Nature">
        <title>The sequence and analysis of duplication-rich human chromosome 16.</title>
        <authorList>
            <person name="Martin J."/>
            <person name="Han C."/>
            <person name="Gordon L.A."/>
            <person name="Terry A."/>
            <person name="Prabhakar S."/>
            <person name="She X."/>
            <person name="Xie G."/>
            <person name="Hellsten U."/>
            <person name="Chan Y.M."/>
            <person name="Altherr M."/>
            <person name="Couronne O."/>
            <person name="Aerts A."/>
            <person name="Bajorek E."/>
            <person name="Black S."/>
            <person name="Blumer H."/>
            <person name="Branscomb E."/>
            <person name="Brown N.C."/>
            <person name="Bruno W.J."/>
            <person name="Buckingham J.M."/>
            <person name="Callen D.F."/>
            <person name="Campbell C.S."/>
            <person name="Campbell M.L."/>
            <person name="Campbell E.W."/>
            <person name="Caoile C."/>
            <person name="Challacombe J.F."/>
            <person name="Chasteen L.A."/>
            <person name="Chertkov O."/>
            <person name="Chi H.C."/>
            <person name="Christensen M."/>
            <person name="Clark L.M."/>
            <person name="Cohn J.D."/>
            <person name="Denys M."/>
            <person name="Detter J.C."/>
            <person name="Dickson M."/>
            <person name="Dimitrijevic-Bussod M."/>
            <person name="Escobar J."/>
            <person name="Fawcett J.J."/>
            <person name="Flowers D."/>
            <person name="Fotopulos D."/>
            <person name="Glavina T."/>
            <person name="Gomez M."/>
            <person name="Gonzales E."/>
            <person name="Goodstein D."/>
            <person name="Goodwin L.A."/>
            <person name="Grady D.L."/>
            <person name="Grigoriev I."/>
            <person name="Groza M."/>
            <person name="Hammon N."/>
            <person name="Hawkins T."/>
            <person name="Haydu L."/>
            <person name="Hildebrand C.E."/>
            <person name="Huang W."/>
            <person name="Israni S."/>
            <person name="Jett J."/>
            <person name="Jewett P.B."/>
            <person name="Kadner K."/>
            <person name="Kimball H."/>
            <person name="Kobayashi A."/>
            <person name="Krawczyk M.-C."/>
            <person name="Leyba T."/>
            <person name="Longmire J.L."/>
            <person name="Lopez F."/>
            <person name="Lou Y."/>
            <person name="Lowry S."/>
            <person name="Ludeman T."/>
            <person name="Manohar C.F."/>
            <person name="Mark G.A."/>
            <person name="McMurray K.L."/>
            <person name="Meincke L.J."/>
            <person name="Morgan J."/>
            <person name="Moyzis R.K."/>
            <person name="Mundt M.O."/>
            <person name="Munk A.C."/>
            <person name="Nandkeshwar R.D."/>
            <person name="Pitluck S."/>
            <person name="Pollard M."/>
            <person name="Predki P."/>
            <person name="Parson-Quintana B."/>
            <person name="Ramirez L."/>
            <person name="Rash S."/>
            <person name="Retterer J."/>
            <person name="Ricke D.O."/>
            <person name="Robinson D.L."/>
            <person name="Rodriguez A."/>
            <person name="Salamov A."/>
            <person name="Saunders E.H."/>
            <person name="Scott D."/>
            <person name="Shough T."/>
            <person name="Stallings R.L."/>
            <person name="Stalvey M."/>
            <person name="Sutherland R.D."/>
            <person name="Tapia R."/>
            <person name="Tesmer J.G."/>
            <person name="Thayer N."/>
            <person name="Thompson L.S."/>
            <person name="Tice H."/>
            <person name="Torney D.C."/>
            <person name="Tran-Gyamfi M."/>
            <person name="Tsai M."/>
            <person name="Ulanovsky L.E."/>
            <person name="Ustaszewska A."/>
            <person name="Vo N."/>
            <person name="White P.S."/>
            <person name="Williams A.L."/>
            <person name="Wills P.L."/>
            <person name="Wu J.-R."/>
            <person name="Wu K."/>
            <person name="Yang J."/>
            <person name="DeJong P."/>
            <person name="Bruce D."/>
            <person name="Doggett N.A."/>
            <person name="Deaven L."/>
            <person name="Schmutz J."/>
            <person name="Grimwood J."/>
            <person name="Richardson P."/>
            <person name="Rokhsar D.S."/>
            <person name="Eichler E.E."/>
            <person name="Gilna P."/>
            <person name="Lucas S.M."/>
            <person name="Myers R.M."/>
            <person name="Rubin E.M."/>
            <person name="Pennacchio L.A."/>
        </authorList>
    </citation>
    <scope>NUCLEOTIDE SEQUENCE [LARGE SCALE GENOMIC DNA]</scope>
</reference>
<reference key="3">
    <citation type="journal article" date="2004" name="Genome Res.">
        <title>The status, quality, and expansion of the NIH full-length cDNA project: the Mammalian Gene Collection (MGC).</title>
        <authorList>
            <consortium name="The MGC Project Team"/>
        </authorList>
    </citation>
    <scope>NUCLEOTIDE SEQUENCE [LARGE SCALE MRNA] (ISOFORM 2)</scope>
</reference>
<protein>
    <recommendedName>
        <fullName>Putative inactive carboxylesterase 4</fullName>
    </recommendedName>
    <alternativeName>
        <fullName>Inactive carboxylesterase 1 pseudogene 1</fullName>
    </alternativeName>
    <alternativeName>
        <fullName>Placental carboxylesterase 3</fullName>
        <shortName>PCE-3</shortName>
    </alternativeName>
</protein>
<organism>
    <name type="scientific">Homo sapiens</name>
    <name type="common">Human</name>
    <dbReference type="NCBI Taxonomy" id="9606"/>
    <lineage>
        <taxon>Eukaryota</taxon>
        <taxon>Metazoa</taxon>
        <taxon>Chordata</taxon>
        <taxon>Craniata</taxon>
        <taxon>Vertebrata</taxon>
        <taxon>Euteleostomi</taxon>
        <taxon>Mammalia</taxon>
        <taxon>Eutheria</taxon>
        <taxon>Euarchontoglires</taxon>
        <taxon>Primates</taxon>
        <taxon>Haplorrhini</taxon>
        <taxon>Catarrhini</taxon>
        <taxon>Hominidae</taxon>
        <taxon>Homo</taxon>
    </lineage>
</organism>
<dbReference type="EMBL" id="AF106005">
    <property type="protein sequence ID" value="AAF14185.1"/>
    <property type="status" value="ALT_FRAME"/>
    <property type="molecule type" value="mRNA"/>
</dbReference>
<dbReference type="EMBL" id="AC136621">
    <property type="status" value="NOT_ANNOTATED_CDS"/>
    <property type="molecule type" value="Genomic_DNA"/>
</dbReference>
<dbReference type="EMBL" id="BC131699">
    <property type="status" value="NOT_ANNOTATED_CDS"/>
    <property type="molecule type" value="mRNA"/>
</dbReference>
<dbReference type="SMR" id="Q9UKY3"/>
<dbReference type="FunCoup" id="Q9UKY3">
    <property type="interactions" value="2"/>
</dbReference>
<dbReference type="DrugBank" id="DB08612">
    <property type="generic name" value="1,1,1-TRIFLUORO-3-(OCTYLTHIO)ACETONE"/>
</dbReference>
<dbReference type="MEROPS" id="S09.986"/>
<dbReference type="GlyCosmos" id="Q9UKY3">
    <property type="glycosylation" value="1 site, No reported glycans"/>
</dbReference>
<dbReference type="GlyGen" id="Q9UKY3">
    <property type="glycosylation" value="1 site"/>
</dbReference>
<dbReference type="BioMuta" id="HGNC:18546"/>
<dbReference type="DMDM" id="215273984"/>
<dbReference type="jPOST" id="Q9UKY3"/>
<dbReference type="MassIVE" id="Q9UKY3"/>
<dbReference type="PeptideAtlas" id="Q9UKY3"/>
<dbReference type="ProteomicsDB" id="84910">
    <molecule id="Q9UKY3-1"/>
</dbReference>
<dbReference type="ProteomicsDB" id="84911">
    <molecule id="Q9UKY3-2"/>
</dbReference>
<dbReference type="AGR" id="HGNC:18546"/>
<dbReference type="GeneCards" id="CES1P1"/>
<dbReference type="HGNC" id="HGNC:18546">
    <property type="gene designation" value="CES1P1"/>
</dbReference>
<dbReference type="neXtProt" id="NX_Q9UKY3"/>
<dbReference type="InParanoid" id="Q9UKY3"/>
<dbReference type="PAN-GO" id="Q9UKY3">
    <property type="GO annotations" value="4 GO annotations based on evolutionary models"/>
</dbReference>
<dbReference type="PhylomeDB" id="Q9UKY3"/>
<dbReference type="PathwayCommons" id="Q9UKY3"/>
<dbReference type="Pharos" id="Q9UKY3">
    <property type="development level" value="Tdark"/>
</dbReference>
<dbReference type="PRO" id="PR:Q9UKY3"/>
<dbReference type="Proteomes" id="UP000005640">
    <property type="component" value="Unplaced"/>
</dbReference>
<dbReference type="RNAct" id="Q9UKY3">
    <property type="molecule type" value="protein"/>
</dbReference>
<dbReference type="GO" id="GO:0005783">
    <property type="term" value="C:endoplasmic reticulum"/>
    <property type="evidence" value="ECO:0000318"/>
    <property type="project" value="GO_Central"/>
</dbReference>
<dbReference type="GO" id="GO:0005576">
    <property type="term" value="C:extracellular region"/>
    <property type="evidence" value="ECO:0007669"/>
    <property type="project" value="UniProtKB-SubCell"/>
</dbReference>
<dbReference type="GO" id="GO:0005811">
    <property type="term" value="C:lipid droplet"/>
    <property type="evidence" value="ECO:0000318"/>
    <property type="project" value="GO_Central"/>
</dbReference>
<dbReference type="GO" id="GO:0052689">
    <property type="term" value="F:carboxylic ester hydrolase activity"/>
    <property type="evidence" value="ECO:0000318"/>
    <property type="project" value="GO_Central"/>
</dbReference>
<dbReference type="GO" id="GO:0009653">
    <property type="term" value="P:anatomical structure morphogenesis"/>
    <property type="evidence" value="ECO:0000304"/>
    <property type="project" value="ProtInc"/>
</dbReference>
<dbReference type="GO" id="GO:0016042">
    <property type="term" value="P:lipid catabolic process"/>
    <property type="evidence" value="ECO:0000318"/>
    <property type="project" value="GO_Central"/>
</dbReference>
<dbReference type="FunFam" id="3.40.50.1820:FF:000535">
    <property type="entry name" value="Carboxylic ester hydrolase"/>
    <property type="match status" value="1"/>
</dbReference>
<dbReference type="Gene3D" id="3.40.50.1820">
    <property type="entry name" value="alpha/beta hydrolase"/>
    <property type="match status" value="1"/>
</dbReference>
<dbReference type="InterPro" id="IPR029058">
    <property type="entry name" value="AB_hydrolase_fold"/>
</dbReference>
<dbReference type="InterPro" id="IPR002018">
    <property type="entry name" value="CarbesteraseB"/>
</dbReference>
<dbReference type="InterPro" id="IPR019819">
    <property type="entry name" value="Carboxylesterase_B_CS"/>
</dbReference>
<dbReference type="InterPro" id="IPR050309">
    <property type="entry name" value="Type-B_Carboxylest/Lipase"/>
</dbReference>
<dbReference type="PANTHER" id="PTHR11559">
    <property type="entry name" value="CARBOXYLESTERASE"/>
    <property type="match status" value="1"/>
</dbReference>
<dbReference type="Pfam" id="PF00135">
    <property type="entry name" value="COesterase"/>
    <property type="match status" value="1"/>
</dbReference>
<dbReference type="SUPFAM" id="SSF53474">
    <property type="entry name" value="alpha/beta-Hydrolases"/>
    <property type="match status" value="1"/>
</dbReference>
<dbReference type="PROSITE" id="PS00941">
    <property type="entry name" value="CARBOXYLESTERASE_B_2"/>
    <property type="match status" value="1"/>
</dbReference>
<keyword id="KW-0025">Alternative splicing</keyword>
<keyword id="KW-0325">Glycoprotein</keyword>
<keyword id="KW-1267">Proteomics identification</keyword>
<keyword id="KW-1185">Reference proteome</keyword>
<keyword id="KW-0964">Secreted</keyword>
<keyword id="KW-0732">Signal</keyword>
<proteinExistence type="uncertain"/>
<gene>
    <name type="primary">CES1P1</name>
    <name type="synonym">CES4</name>
</gene>
<sequence>MWLPALVLATLAASAAWAGHLSSPPLVDTLHGKVLGKFVSLEGFAQPVAVFLGIPFAKPPLGPLRFTLPQPAEPWNFVKNATSYPPMFTQDPKAGQLISELFTNRKENIPLKLSEDCLYLNIYTPADLTKKNRLPVMVWIHGGGLMVGAASTYDGLALAAHENVVVVTIQYRLGIWGFFSTGDEHSPGNWGHLDQLAALHWVQDNIASFGGNPGSVTIFGGSVGGESVSVLVLSPLAKNLFHRAISESGVALTSVLVKKGDVKPLAEVGLRLVRLRLDTPTSLALCS</sequence>
<comment type="function">
    <text evidence="4">Has no esterase activity.</text>
</comment>
<comment type="subcellular location">
    <subcellularLocation>
        <location evidence="4">Secreted</location>
    </subcellularLocation>
</comment>
<comment type="alternative products">
    <event type="alternative splicing"/>
    <isoform>
        <id>Q9UKY3-1</id>
        <name>1</name>
        <sequence type="displayed"/>
    </isoform>
    <isoform>
        <id>Q9UKY3-2</id>
        <name>2</name>
        <sequence type="described" ref="VSP_029004"/>
    </isoform>
</comment>
<comment type="tissue specificity">
    <text evidence="2">Expressed in placenta.</text>
</comment>
<comment type="similarity">
    <text evidence="4">Belongs to the type-B carboxylesterase/lipase family.</text>
</comment>
<comment type="caution">
    <text evidence="4">In contrast to other members of the family, it is shorter and lacks the C-terminal part that contains the conserved Glu and His active sites.</text>
</comment>
<comment type="caution">
    <text evidence="4">Could be the product of a pseudogene.</text>
</comment>
<comment type="sequence caution" evidence="4">
    <conflict type="frameshift">
        <sequence resource="EMBL-CDS" id="AAF14185"/>
    </conflict>
</comment>
<name>CES1P_HUMAN</name>
<accession>Q9UKY3</accession>
<accession>A2RRL8</accession>
<accession>B9ZVS2</accession>
<feature type="signal peptide" evidence="1">
    <location>
        <begin position="1"/>
        <end position="18"/>
    </location>
</feature>
<feature type="chain" id="PRO_0000308588" description="Putative inactive carboxylesterase 4">
    <location>
        <begin position="19"/>
        <end position="287"/>
    </location>
</feature>
<feature type="glycosylation site" description="N-linked (GlcNAc...) asparagine" evidence="1">
    <location>
        <position position="80"/>
    </location>
</feature>
<feature type="splice variant" id="VSP_029004" description="In isoform 2." evidence="3">
    <location>
        <begin position="1"/>
        <end position="136"/>
    </location>
</feature>
<feature type="sequence conflict" description="In Ref. 1; AAF14185." evidence="4" ref="1">
    <original>G</original>
    <variation>V</variation>
    <location>
        <position position="19"/>
    </location>
</feature>
<feature type="sequence conflict" description="In Ref. 1; AAF14185." evidence="4" ref="1">
    <original>L</original>
    <variation>P</variation>
    <location>
        <position position="21"/>
    </location>
</feature>
<feature type="sequence conflict" description="In Ref. 1; AAF14185." evidence="4" ref="1">
    <original>L</original>
    <variation>V</variation>
    <location>
        <position position="26"/>
    </location>
</feature>
<feature type="sequence conflict" description="In Ref. 1; AAF14185." evidence="4" ref="1">
    <original>L</original>
    <variation>V</variation>
    <location>
        <position position="30"/>
    </location>
</feature>
<feature type="sequence conflict" description="In Ref. 1; AAF14185." evidence="4" ref="1">
    <original>V</original>
    <variation>I</variation>
    <location>
        <position position="39"/>
    </location>
</feature>
<feature type="sequence conflict" description="In Ref. 1; AAF14185." evidence="4" ref="1">
    <original>L</original>
    <variation>P</variation>
    <location>
        <position position="68"/>
    </location>
</feature>
<feature type="sequence conflict" description="In Ref. 1; AAF14185." evidence="4" ref="1">
    <original>N</original>
    <variation>S</variation>
    <location>
        <position position="76"/>
    </location>
</feature>
<feature type="sequence conflict" description="In Ref. 1; AAF14185." evidence="4" ref="1">
    <original>S</original>
    <variation>L</variation>
    <location>
        <position position="83"/>
    </location>
</feature>
<feature type="sequence conflict" description="In Ref. 3; BC131699." evidence="4" ref="3">
    <original>W</original>
    <variation>C</variation>
    <location>
        <position position="190"/>
    </location>
</feature>
<feature type="sequence conflict" description="In Ref. 1; AAF14185 and 3; BC131699." evidence="4" ref="1 3">
    <original>V</original>
    <variation>A</variation>
    <location>
        <position position="223"/>
    </location>
</feature>
<feature type="sequence conflict" description="In Ref. 1; AAF14185 and 3; BC131699." evidence="4" ref="1 3">
    <original>R</original>
    <variation>W</variation>
    <location>
        <position position="276"/>
    </location>
</feature>
<feature type="sequence conflict" description="In Ref. 1; AAF14185 and 3; BC131699." evidence="4" ref="1 3">
    <original>P</original>
    <variation>H</variation>
    <location>
        <position position="280"/>
    </location>
</feature>
<evidence type="ECO:0000255" key="1"/>
<evidence type="ECO:0000269" key="2">
    <source>
    </source>
</evidence>
<evidence type="ECO:0000303" key="3">
    <source>
    </source>
</evidence>
<evidence type="ECO:0000305" key="4"/>